<organism>
    <name type="scientific">Vibrio parahaemolyticus serotype O3:K6 (strain RIMD 2210633)</name>
    <dbReference type="NCBI Taxonomy" id="223926"/>
    <lineage>
        <taxon>Bacteria</taxon>
        <taxon>Pseudomonadati</taxon>
        <taxon>Pseudomonadota</taxon>
        <taxon>Gammaproteobacteria</taxon>
        <taxon>Vibrionales</taxon>
        <taxon>Vibrionaceae</taxon>
        <taxon>Vibrio</taxon>
    </lineage>
</organism>
<name>TRPD_VIBPA</name>
<gene>
    <name evidence="1" type="primary">trpD</name>
    <name type="ordered locus">VP1958</name>
</gene>
<proteinExistence type="inferred from homology"/>
<dbReference type="EC" id="2.4.2.18" evidence="1"/>
<dbReference type="EMBL" id="X17149">
    <property type="protein sequence ID" value="CAA35033.1"/>
    <property type="molecule type" value="Genomic_DNA"/>
</dbReference>
<dbReference type="EMBL" id="BA000031">
    <property type="protein sequence ID" value="BAC60221.1"/>
    <property type="molecule type" value="Genomic_DNA"/>
</dbReference>
<dbReference type="RefSeq" id="NP_798337.1">
    <property type="nucleotide sequence ID" value="NC_004603.1"/>
</dbReference>
<dbReference type="RefSeq" id="WP_005465092.1">
    <property type="nucleotide sequence ID" value="NC_004603.1"/>
</dbReference>
<dbReference type="SMR" id="P22096"/>
<dbReference type="GeneID" id="1189469"/>
<dbReference type="KEGG" id="vpa:VP1958"/>
<dbReference type="PATRIC" id="fig|223926.6.peg.1873"/>
<dbReference type="eggNOG" id="COG0547">
    <property type="taxonomic scope" value="Bacteria"/>
</dbReference>
<dbReference type="HOGENOM" id="CLU_034315_2_1_6"/>
<dbReference type="UniPathway" id="UPA00035">
    <property type="reaction ID" value="UER00041"/>
</dbReference>
<dbReference type="Proteomes" id="UP000002493">
    <property type="component" value="Chromosome 1"/>
</dbReference>
<dbReference type="GO" id="GO:0005829">
    <property type="term" value="C:cytosol"/>
    <property type="evidence" value="ECO:0007669"/>
    <property type="project" value="TreeGrafter"/>
</dbReference>
<dbReference type="GO" id="GO:0004048">
    <property type="term" value="F:anthranilate phosphoribosyltransferase activity"/>
    <property type="evidence" value="ECO:0007669"/>
    <property type="project" value="UniProtKB-UniRule"/>
</dbReference>
<dbReference type="GO" id="GO:0000287">
    <property type="term" value="F:magnesium ion binding"/>
    <property type="evidence" value="ECO:0007669"/>
    <property type="project" value="UniProtKB-UniRule"/>
</dbReference>
<dbReference type="GO" id="GO:0000162">
    <property type="term" value="P:L-tryptophan biosynthetic process"/>
    <property type="evidence" value="ECO:0007669"/>
    <property type="project" value="UniProtKB-UniRule"/>
</dbReference>
<dbReference type="FunFam" id="1.20.970.10:FF:000003">
    <property type="entry name" value="Anthranilate phosphoribosyltransferase"/>
    <property type="match status" value="1"/>
</dbReference>
<dbReference type="FunFam" id="3.40.1030.10:FF:000002">
    <property type="entry name" value="Anthranilate phosphoribosyltransferase"/>
    <property type="match status" value="1"/>
</dbReference>
<dbReference type="Gene3D" id="3.40.1030.10">
    <property type="entry name" value="Nucleoside phosphorylase/phosphoribosyltransferase catalytic domain"/>
    <property type="match status" value="1"/>
</dbReference>
<dbReference type="Gene3D" id="1.20.970.10">
    <property type="entry name" value="Transferase, Pyrimidine Nucleoside Phosphorylase, Chain C"/>
    <property type="match status" value="1"/>
</dbReference>
<dbReference type="HAMAP" id="MF_00211">
    <property type="entry name" value="TrpD"/>
    <property type="match status" value="1"/>
</dbReference>
<dbReference type="InterPro" id="IPR005940">
    <property type="entry name" value="Anthranilate_Pribosyl_Tfrase"/>
</dbReference>
<dbReference type="InterPro" id="IPR000312">
    <property type="entry name" value="Glycosyl_Trfase_fam3"/>
</dbReference>
<dbReference type="InterPro" id="IPR017459">
    <property type="entry name" value="Glycosyl_Trfase_fam3_N_dom"/>
</dbReference>
<dbReference type="InterPro" id="IPR036320">
    <property type="entry name" value="Glycosyl_Trfase_fam3_N_dom_sf"/>
</dbReference>
<dbReference type="InterPro" id="IPR035902">
    <property type="entry name" value="Nuc_phospho_transferase"/>
</dbReference>
<dbReference type="NCBIfam" id="TIGR01245">
    <property type="entry name" value="trpD"/>
    <property type="match status" value="1"/>
</dbReference>
<dbReference type="PANTHER" id="PTHR43285">
    <property type="entry name" value="ANTHRANILATE PHOSPHORIBOSYLTRANSFERASE"/>
    <property type="match status" value="1"/>
</dbReference>
<dbReference type="PANTHER" id="PTHR43285:SF2">
    <property type="entry name" value="ANTHRANILATE PHOSPHORIBOSYLTRANSFERASE"/>
    <property type="match status" value="1"/>
</dbReference>
<dbReference type="Pfam" id="PF02885">
    <property type="entry name" value="Glycos_trans_3N"/>
    <property type="match status" value="1"/>
</dbReference>
<dbReference type="Pfam" id="PF00591">
    <property type="entry name" value="Glycos_transf_3"/>
    <property type="match status" value="1"/>
</dbReference>
<dbReference type="SUPFAM" id="SSF52418">
    <property type="entry name" value="Nucleoside phosphorylase/phosphoribosyltransferase catalytic domain"/>
    <property type="match status" value="1"/>
</dbReference>
<dbReference type="SUPFAM" id="SSF47648">
    <property type="entry name" value="Nucleoside phosphorylase/phosphoribosyltransferase N-terminal domain"/>
    <property type="match status" value="1"/>
</dbReference>
<comment type="function">
    <text evidence="1">Catalyzes the transfer of the phosphoribosyl group of 5-phosphorylribose-1-pyrophosphate (PRPP) to anthranilate to yield N-(5'-phosphoribosyl)-anthranilate (PRA).</text>
</comment>
<comment type="catalytic activity">
    <reaction evidence="1">
        <text>N-(5-phospho-beta-D-ribosyl)anthranilate + diphosphate = 5-phospho-alpha-D-ribose 1-diphosphate + anthranilate</text>
        <dbReference type="Rhea" id="RHEA:11768"/>
        <dbReference type="ChEBI" id="CHEBI:16567"/>
        <dbReference type="ChEBI" id="CHEBI:18277"/>
        <dbReference type="ChEBI" id="CHEBI:33019"/>
        <dbReference type="ChEBI" id="CHEBI:58017"/>
        <dbReference type="EC" id="2.4.2.18"/>
    </reaction>
</comment>
<comment type="cofactor">
    <cofactor evidence="1">
        <name>Mg(2+)</name>
        <dbReference type="ChEBI" id="CHEBI:18420"/>
    </cofactor>
    <text evidence="1">Binds 2 magnesium ions per monomer.</text>
</comment>
<comment type="pathway">
    <text evidence="1">Amino-acid biosynthesis; L-tryptophan biosynthesis; L-tryptophan from chorismate: step 2/5.</text>
</comment>
<comment type="subunit">
    <text evidence="1">Homodimer.</text>
</comment>
<comment type="similarity">
    <text evidence="1">Belongs to the anthranilate phosphoribosyltransferase family.</text>
</comment>
<protein>
    <recommendedName>
        <fullName evidence="1">Anthranilate phosphoribosyltransferase</fullName>
        <ecNumber evidence="1">2.4.2.18</ecNumber>
    </recommendedName>
</protein>
<feature type="chain" id="PRO_0000154499" description="Anthranilate phosphoribosyltransferase">
    <location>
        <begin position="1"/>
        <end position="332"/>
    </location>
</feature>
<feature type="binding site" evidence="1">
    <location>
        <position position="79"/>
    </location>
    <ligand>
        <name>5-phospho-alpha-D-ribose 1-diphosphate</name>
        <dbReference type="ChEBI" id="CHEBI:58017"/>
    </ligand>
</feature>
<feature type="binding site" evidence="1">
    <location>
        <position position="79"/>
    </location>
    <ligand>
        <name>anthranilate</name>
        <dbReference type="ChEBI" id="CHEBI:16567"/>
        <label>1</label>
    </ligand>
</feature>
<feature type="binding site" evidence="1">
    <location>
        <begin position="82"/>
        <end position="83"/>
    </location>
    <ligand>
        <name>5-phospho-alpha-D-ribose 1-diphosphate</name>
        <dbReference type="ChEBI" id="CHEBI:58017"/>
    </ligand>
</feature>
<feature type="binding site" evidence="1">
    <location>
        <position position="87"/>
    </location>
    <ligand>
        <name>5-phospho-alpha-D-ribose 1-diphosphate</name>
        <dbReference type="ChEBI" id="CHEBI:58017"/>
    </ligand>
</feature>
<feature type="binding site" evidence="1">
    <location>
        <begin position="89"/>
        <end position="92"/>
    </location>
    <ligand>
        <name>5-phospho-alpha-D-ribose 1-diphosphate</name>
        <dbReference type="ChEBI" id="CHEBI:58017"/>
    </ligand>
</feature>
<feature type="binding site" evidence="1">
    <location>
        <position position="91"/>
    </location>
    <ligand>
        <name>Mg(2+)</name>
        <dbReference type="ChEBI" id="CHEBI:18420"/>
        <label>1</label>
    </ligand>
</feature>
<feature type="binding site" evidence="1">
    <location>
        <begin position="107"/>
        <end position="115"/>
    </location>
    <ligand>
        <name>5-phospho-alpha-D-ribose 1-diphosphate</name>
        <dbReference type="ChEBI" id="CHEBI:58017"/>
    </ligand>
</feature>
<feature type="binding site" evidence="1">
    <location>
        <position position="110"/>
    </location>
    <ligand>
        <name>anthranilate</name>
        <dbReference type="ChEBI" id="CHEBI:16567"/>
        <label>1</label>
    </ligand>
</feature>
<feature type="binding site" evidence="1">
    <location>
        <position position="119"/>
    </location>
    <ligand>
        <name>5-phospho-alpha-D-ribose 1-diphosphate</name>
        <dbReference type="ChEBI" id="CHEBI:58017"/>
    </ligand>
</feature>
<feature type="binding site" evidence="1">
    <location>
        <position position="165"/>
    </location>
    <ligand>
        <name>anthranilate</name>
        <dbReference type="ChEBI" id="CHEBI:16567"/>
        <label>2</label>
    </ligand>
</feature>
<feature type="binding site" evidence="1">
    <location>
        <position position="223"/>
    </location>
    <ligand>
        <name>Mg(2+)</name>
        <dbReference type="ChEBI" id="CHEBI:18420"/>
        <label>2</label>
    </ligand>
</feature>
<feature type="binding site" evidence="1">
    <location>
        <position position="224"/>
    </location>
    <ligand>
        <name>Mg(2+)</name>
        <dbReference type="ChEBI" id="CHEBI:18420"/>
        <label>1</label>
    </ligand>
</feature>
<feature type="binding site" evidence="1">
    <location>
        <position position="224"/>
    </location>
    <ligand>
        <name>Mg(2+)</name>
        <dbReference type="ChEBI" id="CHEBI:18420"/>
        <label>2</label>
    </ligand>
</feature>
<reference key="1">
    <citation type="journal article" date="1991" name="DNA Seq.">
        <title>Sequence and features of the tryptophan operon of Vibrio parahemolyticus.</title>
        <authorList>
            <person name="Crawford I.P."/>
            <person name="Han C.Y."/>
            <person name="Silverman M."/>
        </authorList>
    </citation>
    <scope>NUCLEOTIDE SEQUENCE [GENOMIC DNA]</scope>
    <source>
        <strain>BB22</strain>
    </source>
</reference>
<reference key="2">
    <citation type="journal article" date="2003" name="Lancet">
        <title>Genome sequence of Vibrio parahaemolyticus: a pathogenic mechanism distinct from that of V. cholerae.</title>
        <authorList>
            <person name="Makino K."/>
            <person name="Oshima K."/>
            <person name="Kurokawa K."/>
            <person name="Yokoyama K."/>
            <person name="Uda T."/>
            <person name="Tagomori K."/>
            <person name="Iijima Y."/>
            <person name="Najima M."/>
            <person name="Nakano M."/>
            <person name="Yamashita A."/>
            <person name="Kubota Y."/>
            <person name="Kimura S."/>
            <person name="Yasunaga T."/>
            <person name="Honda T."/>
            <person name="Shinagawa H."/>
            <person name="Hattori M."/>
            <person name="Iida T."/>
        </authorList>
    </citation>
    <scope>NUCLEOTIDE SEQUENCE [LARGE SCALE GENOMIC DNA]</scope>
    <source>
        <strain>RIMD 2210633</strain>
    </source>
</reference>
<evidence type="ECO:0000255" key="1">
    <source>
        <dbReference type="HAMAP-Rule" id="MF_00211"/>
    </source>
</evidence>
<sequence length="332" mass="35415">MEAIINKLYEQQSLTQEESQQLFDIIIRGELDPILMASALTALKIKGETPDEIAGAAKALLANANPFPRPDYDFADIVGTGGDGHNTINISTTAAFVAAACGLKVAKHGNRSVSSKSGSSDLLDSFGINLAMSAEDTRKAVDDIGVAFLFAPQYHGGVRHAMPVRQTMKTRTIFNILGPLINPARPNIELMGVYSEELVRPIAETMLQMGMKRAAVVHGSGLDEVAIHGTTTVAEIKDGKITEYTLTPEDFGLESHPLEAIKGGDPEENKAIITNILTGKGTDAQLGAVAVNVALLMRLFGHEDLKANTQQAIEAMNSGKAYQLVQQLAAHA</sequence>
<accession>P22096</accession>
<keyword id="KW-0028">Amino-acid biosynthesis</keyword>
<keyword id="KW-0057">Aromatic amino acid biosynthesis</keyword>
<keyword id="KW-0328">Glycosyltransferase</keyword>
<keyword id="KW-0460">Magnesium</keyword>
<keyword id="KW-0479">Metal-binding</keyword>
<keyword id="KW-0808">Transferase</keyword>
<keyword id="KW-0822">Tryptophan biosynthesis</keyword>